<keyword id="KW-0653">Protein transport</keyword>
<keyword id="KW-1185">Reference proteome</keyword>
<keyword id="KW-0813">Transport</keyword>
<sequence>MSFSDSGSSSYGGEYKNFRQITRERLLCEMLRPERNGSSKLTWKVLVMDKFTVKIMSSACKMSEITQEGISLVEVITKHRQPMTAMEVIYFIQPTEENVTAFLSDMTGKSPLYKKAFVFFSSPVSRSLVNLIKKDMRAMKRIGGLKEMNLEYISMDIQGFVTNNENALEELFCDDENHQRADACLNVVAKRIATVLASLKEYPFVRYRGAKALDATTMTTYRELIPTKLAASVWNCLARYKQTIEDFPQTETCELLILDRSIDQIAPLIHEWTYDAMCHDLLNMEGNKYTHEVPSKTGDKPEKKEVLLDEEDSIWVELRDAHIADASERLHEKMTNFVSKNKAAQLKHSSKDFGDLSSKDLQKMVHALPQYSEQIDKLSLHVEIARTINRTIMEQGLRDLGQLEQDLVFGDAGRKDVIKFLSTNHIISHESKLRLIMIVAAIYPKKFEGEKGRKMMELAKLSGDDVVAVNNMRLLGPVHTECKKSTTGSFPLKFDVLKTKRAARRDRVGETQTWQLSRFYPIVEELVEKLSKGHLPKQDYPCMNEPKPTFYSGSLSPSASPVLPHSRRTPTWARRHLSDDGYFSDSVLGRASSGFKRKGQRIFVFIVGGATRSELRVCHKLTEKLDREVILGSSSFLDPLTFLTKMKQLNEEEEISLDDIVI</sequence>
<comment type="function">
    <text evidence="1">Involved in the vesicle trafficking. Binds syntaxins (By similarity).</text>
</comment>
<comment type="similarity">
    <text evidence="2">Belongs to the STXBP/unc-18/SEC1 family.</text>
</comment>
<comment type="sequence caution" evidence="2">
    <conflict type="erroneous gene model prediction">
        <sequence resource="EMBL-CDS" id="CAB40953"/>
    </conflict>
</comment>
<comment type="sequence caution" evidence="2">
    <conflict type="erroneous gene model prediction">
        <sequence resource="EMBL-CDS" id="CAB78255"/>
    </conflict>
</comment>
<evidence type="ECO:0000250" key="1"/>
<evidence type="ECO:0000305" key="2"/>
<reference key="1">
    <citation type="journal article" date="1999" name="Nature">
        <title>Sequence and analysis of chromosome 4 of the plant Arabidopsis thaliana.</title>
        <authorList>
            <person name="Mayer K.F.X."/>
            <person name="Schueller C."/>
            <person name="Wambutt R."/>
            <person name="Murphy G."/>
            <person name="Volckaert G."/>
            <person name="Pohl T."/>
            <person name="Duesterhoeft A."/>
            <person name="Stiekema W."/>
            <person name="Entian K.-D."/>
            <person name="Terryn N."/>
            <person name="Harris B."/>
            <person name="Ansorge W."/>
            <person name="Brandt P."/>
            <person name="Grivell L.A."/>
            <person name="Rieger M."/>
            <person name="Weichselgartner M."/>
            <person name="de Simone V."/>
            <person name="Obermaier B."/>
            <person name="Mache R."/>
            <person name="Mueller M."/>
            <person name="Kreis M."/>
            <person name="Delseny M."/>
            <person name="Puigdomenech P."/>
            <person name="Watson M."/>
            <person name="Schmidtheini T."/>
            <person name="Reichert B."/>
            <person name="Portetelle D."/>
            <person name="Perez-Alonso M."/>
            <person name="Boutry M."/>
            <person name="Bancroft I."/>
            <person name="Vos P."/>
            <person name="Hoheisel J."/>
            <person name="Zimmermann W."/>
            <person name="Wedler H."/>
            <person name="Ridley P."/>
            <person name="Langham S.-A."/>
            <person name="McCullagh B."/>
            <person name="Bilham L."/>
            <person name="Robben J."/>
            <person name="van der Schueren J."/>
            <person name="Grymonprez B."/>
            <person name="Chuang Y.-J."/>
            <person name="Vandenbussche F."/>
            <person name="Braeken M."/>
            <person name="Weltjens I."/>
            <person name="Voet M."/>
            <person name="Bastiaens I."/>
            <person name="Aert R."/>
            <person name="Defoor E."/>
            <person name="Weitzenegger T."/>
            <person name="Bothe G."/>
            <person name="Ramsperger U."/>
            <person name="Hilbert H."/>
            <person name="Braun M."/>
            <person name="Holzer E."/>
            <person name="Brandt A."/>
            <person name="Peters S."/>
            <person name="van Staveren M."/>
            <person name="Dirkse W."/>
            <person name="Mooijman P."/>
            <person name="Klein Lankhorst R."/>
            <person name="Rose M."/>
            <person name="Hauf J."/>
            <person name="Koetter P."/>
            <person name="Berneiser S."/>
            <person name="Hempel S."/>
            <person name="Feldpausch M."/>
            <person name="Lamberth S."/>
            <person name="Van den Daele H."/>
            <person name="De Keyser A."/>
            <person name="Buysshaert C."/>
            <person name="Gielen J."/>
            <person name="Villarroel R."/>
            <person name="De Clercq R."/>
            <person name="van Montagu M."/>
            <person name="Rogers J."/>
            <person name="Cronin A."/>
            <person name="Quail M.A."/>
            <person name="Bray-Allen S."/>
            <person name="Clark L."/>
            <person name="Doggett J."/>
            <person name="Hall S."/>
            <person name="Kay M."/>
            <person name="Lennard N."/>
            <person name="McLay K."/>
            <person name="Mayes R."/>
            <person name="Pettett A."/>
            <person name="Rajandream M.A."/>
            <person name="Lyne M."/>
            <person name="Benes V."/>
            <person name="Rechmann S."/>
            <person name="Borkova D."/>
            <person name="Bloecker H."/>
            <person name="Scharfe M."/>
            <person name="Grimm M."/>
            <person name="Loehnert T.-H."/>
            <person name="Dose S."/>
            <person name="de Haan M."/>
            <person name="Maarse A.C."/>
            <person name="Schaefer M."/>
            <person name="Mueller-Auer S."/>
            <person name="Gabel C."/>
            <person name="Fuchs M."/>
            <person name="Fartmann B."/>
            <person name="Granderath K."/>
            <person name="Dauner D."/>
            <person name="Herzl A."/>
            <person name="Neumann S."/>
            <person name="Argiriou A."/>
            <person name="Vitale D."/>
            <person name="Liguori R."/>
            <person name="Piravandi E."/>
            <person name="Massenet O."/>
            <person name="Quigley F."/>
            <person name="Clabauld G."/>
            <person name="Muendlein A."/>
            <person name="Felber R."/>
            <person name="Schnabl S."/>
            <person name="Hiller R."/>
            <person name="Schmidt W."/>
            <person name="Lecharny A."/>
            <person name="Aubourg S."/>
            <person name="Chefdor F."/>
            <person name="Cooke R."/>
            <person name="Berger C."/>
            <person name="Monfort A."/>
            <person name="Casacuberta E."/>
            <person name="Gibbons T."/>
            <person name="Weber N."/>
            <person name="Vandenbol M."/>
            <person name="Bargues M."/>
            <person name="Terol J."/>
            <person name="Torres A."/>
            <person name="Perez-Perez A."/>
            <person name="Purnelle B."/>
            <person name="Bent E."/>
            <person name="Johnson S."/>
            <person name="Tacon D."/>
            <person name="Jesse T."/>
            <person name="Heijnen L."/>
            <person name="Schwarz S."/>
            <person name="Scholler P."/>
            <person name="Heber S."/>
            <person name="Francs P."/>
            <person name="Bielke C."/>
            <person name="Frishman D."/>
            <person name="Haase D."/>
            <person name="Lemcke K."/>
            <person name="Mewes H.-W."/>
            <person name="Stocker S."/>
            <person name="Zaccaria P."/>
            <person name="Bevan M."/>
            <person name="Wilson R.K."/>
            <person name="de la Bastide M."/>
            <person name="Habermann K."/>
            <person name="Parnell L."/>
            <person name="Dedhia N."/>
            <person name="Gnoj L."/>
            <person name="Schutz K."/>
            <person name="Huang E."/>
            <person name="Spiegel L."/>
            <person name="Sekhon M."/>
            <person name="Murray J."/>
            <person name="Sheet P."/>
            <person name="Cordes M."/>
            <person name="Abu-Threideh J."/>
            <person name="Stoneking T."/>
            <person name="Kalicki J."/>
            <person name="Graves T."/>
            <person name="Harmon G."/>
            <person name="Edwards J."/>
            <person name="Latreille P."/>
            <person name="Courtney L."/>
            <person name="Cloud J."/>
            <person name="Abbott A."/>
            <person name="Scott K."/>
            <person name="Johnson D."/>
            <person name="Minx P."/>
            <person name="Bentley D."/>
            <person name="Fulton B."/>
            <person name="Miller N."/>
            <person name="Greco T."/>
            <person name="Kemp K."/>
            <person name="Kramer J."/>
            <person name="Fulton L."/>
            <person name="Mardis E."/>
            <person name="Dante M."/>
            <person name="Pepin K."/>
            <person name="Hillier L.W."/>
            <person name="Nelson J."/>
            <person name="Spieth J."/>
            <person name="Ryan E."/>
            <person name="Andrews S."/>
            <person name="Geisel C."/>
            <person name="Layman D."/>
            <person name="Du H."/>
            <person name="Ali J."/>
            <person name="Berghoff A."/>
            <person name="Jones K."/>
            <person name="Drone K."/>
            <person name="Cotton M."/>
            <person name="Joshu C."/>
            <person name="Antonoiu B."/>
            <person name="Zidanic M."/>
            <person name="Strong C."/>
            <person name="Sun H."/>
            <person name="Lamar B."/>
            <person name="Yordan C."/>
            <person name="Ma P."/>
            <person name="Zhong J."/>
            <person name="Preston R."/>
            <person name="Vil D."/>
            <person name="Shekher M."/>
            <person name="Matero A."/>
            <person name="Shah R."/>
            <person name="Swaby I.K."/>
            <person name="O'Shaughnessy A."/>
            <person name="Rodriguez M."/>
            <person name="Hoffman J."/>
            <person name="Till S."/>
            <person name="Granat S."/>
            <person name="Shohdy N."/>
            <person name="Hasegawa A."/>
            <person name="Hameed A."/>
            <person name="Lodhi M."/>
            <person name="Johnson A."/>
            <person name="Chen E."/>
            <person name="Marra M.A."/>
            <person name="Martienssen R."/>
            <person name="McCombie W.R."/>
        </authorList>
    </citation>
    <scope>NUCLEOTIDE SEQUENCE [LARGE SCALE GENOMIC DNA]</scope>
    <source>
        <strain>cv. Columbia</strain>
    </source>
</reference>
<reference key="2">
    <citation type="journal article" date="2017" name="Plant J.">
        <title>Araport11: a complete reannotation of the Arabidopsis thaliana reference genome.</title>
        <authorList>
            <person name="Cheng C.Y."/>
            <person name="Krishnakumar V."/>
            <person name="Chan A.P."/>
            <person name="Thibaud-Nissen F."/>
            <person name="Schobel S."/>
            <person name="Town C.D."/>
        </authorList>
    </citation>
    <scope>GENOME REANNOTATION</scope>
    <source>
        <strain>cv. Columbia</strain>
    </source>
</reference>
<reference key="3">
    <citation type="submission" date="2002-03" db="EMBL/GenBank/DDBJ databases">
        <title>Full-length cDNA from Arabidopsis thaliana.</title>
        <authorList>
            <person name="Brover V.V."/>
            <person name="Troukhan M.E."/>
            <person name="Alexandrov N.A."/>
            <person name="Lu Y.-P."/>
            <person name="Flavell R.B."/>
            <person name="Feldmann K.A."/>
        </authorList>
    </citation>
    <scope>NUCLEOTIDE SEQUENCE [LARGE SCALE MRNA]</scope>
</reference>
<name>SEC1B_ARATH</name>
<organism>
    <name type="scientific">Arabidopsis thaliana</name>
    <name type="common">Mouse-ear cress</name>
    <dbReference type="NCBI Taxonomy" id="3702"/>
    <lineage>
        <taxon>Eukaryota</taxon>
        <taxon>Viridiplantae</taxon>
        <taxon>Streptophyta</taxon>
        <taxon>Embryophyta</taxon>
        <taxon>Tracheophyta</taxon>
        <taxon>Spermatophyta</taxon>
        <taxon>Magnoliopsida</taxon>
        <taxon>eudicotyledons</taxon>
        <taxon>Gunneridae</taxon>
        <taxon>Pentapetalae</taxon>
        <taxon>rosids</taxon>
        <taxon>malvids</taxon>
        <taxon>Brassicales</taxon>
        <taxon>Brassicaceae</taxon>
        <taxon>Camelineae</taxon>
        <taxon>Arabidopsis</taxon>
    </lineage>
</organism>
<proteinExistence type="evidence at transcript level"/>
<accession>Q9SZ77</accession>
<protein>
    <recommendedName>
        <fullName>Protein transport Sec1b</fullName>
        <shortName>AtSec1b</shortName>
    </recommendedName>
</protein>
<feature type="chain" id="PRO_0000206296" description="Protein transport Sec1b">
    <location>
        <begin position="1"/>
        <end position="662"/>
    </location>
</feature>
<feature type="sequence conflict" description="In Ref. 3; AAM67096." evidence="2" ref="3">
    <original>E</original>
    <variation>D</variation>
    <location>
        <position position="14"/>
    </location>
</feature>
<feature type="sequence conflict" description="In Ref. 3; AAM67096." evidence="2" ref="3">
    <original>E</original>
    <variation>G</variation>
    <location>
        <position position="68"/>
    </location>
</feature>
<feature type="sequence conflict" description="In Ref. 3; AAM67096." evidence="2" ref="3">
    <original>L</original>
    <variation>V</variation>
    <location>
        <position position="131"/>
    </location>
</feature>
<gene>
    <name type="primary">SEC1B</name>
    <name type="ordered locus">At4g12120</name>
    <name type="ORF">F16J13.190</name>
</gene>
<dbReference type="EMBL" id="AL049638">
    <property type="protein sequence ID" value="CAB40953.1"/>
    <property type="status" value="ALT_SEQ"/>
    <property type="molecule type" value="Genomic_DNA"/>
</dbReference>
<dbReference type="EMBL" id="AL161533">
    <property type="protein sequence ID" value="CAB78255.1"/>
    <property type="status" value="ALT_SEQ"/>
    <property type="molecule type" value="Genomic_DNA"/>
</dbReference>
<dbReference type="EMBL" id="CP002687">
    <property type="protein sequence ID" value="AEE83098.1"/>
    <property type="molecule type" value="Genomic_DNA"/>
</dbReference>
<dbReference type="EMBL" id="AY088783">
    <property type="protein sequence ID" value="AAM67096.1"/>
    <property type="molecule type" value="mRNA"/>
</dbReference>
<dbReference type="RefSeq" id="NP_567388.1">
    <property type="nucleotide sequence ID" value="NM_117282.3"/>
</dbReference>
<dbReference type="SMR" id="Q9SZ77"/>
<dbReference type="BioGRID" id="12118">
    <property type="interactions" value="1"/>
</dbReference>
<dbReference type="FunCoup" id="Q9SZ77">
    <property type="interactions" value="2791"/>
</dbReference>
<dbReference type="STRING" id="3702.Q9SZ77"/>
<dbReference type="iPTMnet" id="Q9SZ77"/>
<dbReference type="PaxDb" id="3702-AT4G12120.1"/>
<dbReference type="ProteomicsDB" id="232828"/>
<dbReference type="EnsemblPlants" id="AT4G12120.1">
    <property type="protein sequence ID" value="AT4G12120.1"/>
    <property type="gene ID" value="AT4G12120"/>
</dbReference>
<dbReference type="GeneID" id="826820"/>
<dbReference type="Gramene" id="AT4G12120.1">
    <property type="protein sequence ID" value="AT4G12120.1"/>
    <property type="gene ID" value="AT4G12120"/>
</dbReference>
<dbReference type="KEGG" id="ath:AT4G12120"/>
<dbReference type="Araport" id="AT4G12120"/>
<dbReference type="TAIR" id="AT4G12120">
    <property type="gene designation" value="SEC1B"/>
</dbReference>
<dbReference type="eggNOG" id="KOG1300">
    <property type="taxonomic scope" value="Eukaryota"/>
</dbReference>
<dbReference type="HOGENOM" id="CLU_009210_3_0_1"/>
<dbReference type="InParanoid" id="Q9SZ77"/>
<dbReference type="OMA" id="ISPTSKX"/>
<dbReference type="PRO" id="PR:Q9SZ77"/>
<dbReference type="Proteomes" id="UP000006548">
    <property type="component" value="Chromosome 4"/>
</dbReference>
<dbReference type="ExpressionAtlas" id="Q9SZ77">
    <property type="expression patterns" value="baseline and differential"/>
</dbReference>
<dbReference type="GO" id="GO:0015031">
    <property type="term" value="P:protein transport"/>
    <property type="evidence" value="ECO:0007669"/>
    <property type="project" value="UniProtKB-KW"/>
</dbReference>
<dbReference type="GO" id="GO:0016192">
    <property type="term" value="P:vesicle-mediated transport"/>
    <property type="evidence" value="ECO:0007669"/>
    <property type="project" value="InterPro"/>
</dbReference>
<dbReference type="FunFam" id="1.25.40.60:FF:000008">
    <property type="entry name" value="Protein transport Sec1b"/>
    <property type="match status" value="1"/>
</dbReference>
<dbReference type="FunFam" id="3.90.830.10:FF:000008">
    <property type="entry name" value="SNARE-interacting protein KEULE"/>
    <property type="match status" value="1"/>
</dbReference>
<dbReference type="Gene3D" id="1.25.40.60">
    <property type="match status" value="1"/>
</dbReference>
<dbReference type="Gene3D" id="3.40.50.1910">
    <property type="match status" value="2"/>
</dbReference>
<dbReference type="Gene3D" id="3.40.50.2060">
    <property type="match status" value="1"/>
</dbReference>
<dbReference type="Gene3D" id="3.90.830.10">
    <property type="entry name" value="Syntaxin Binding Protein 1, Chain A, domain 2"/>
    <property type="match status" value="1"/>
</dbReference>
<dbReference type="InterPro" id="IPR043154">
    <property type="entry name" value="Sec-1-like_dom1"/>
</dbReference>
<dbReference type="InterPro" id="IPR043127">
    <property type="entry name" value="Sec-1-like_dom3a"/>
</dbReference>
<dbReference type="InterPro" id="IPR001619">
    <property type="entry name" value="Sec1-like"/>
</dbReference>
<dbReference type="InterPro" id="IPR027482">
    <property type="entry name" value="Sec1-like_dom2"/>
</dbReference>
<dbReference type="InterPro" id="IPR036045">
    <property type="entry name" value="Sec1-like_sf"/>
</dbReference>
<dbReference type="PANTHER" id="PTHR11679">
    <property type="entry name" value="VESICLE PROTEIN SORTING-ASSOCIATED"/>
    <property type="match status" value="1"/>
</dbReference>
<dbReference type="Pfam" id="PF00995">
    <property type="entry name" value="Sec1"/>
    <property type="match status" value="1"/>
</dbReference>
<dbReference type="PIRSF" id="PIRSF005715">
    <property type="entry name" value="VPS45_Sec1"/>
    <property type="match status" value="1"/>
</dbReference>
<dbReference type="SUPFAM" id="SSF56815">
    <property type="entry name" value="Sec1/munc18-like (SM) proteins"/>
    <property type="match status" value="1"/>
</dbReference>